<sequence length="176" mass="19025">MDLPGPIHDFLLVFLGSGLIVGGLGVVLLTNPIFSAFSLGLVLVCISLFFSLSNSYFVAAAQLLIYVGAINVLILFAVMFMNGSEYSKDLTLWTVGDGITSLVCTSIFISLITTILDTSWYGIIWTTKSNQIIEQDLIGNSQQIGIHLSTDFFLPFELISIILLVSLIGAIAVARQ</sequence>
<protein>
    <recommendedName>
        <fullName>NAD(P)H-quinone oxidoreductase subunit 6, chloroplastic</fullName>
        <ecNumber>7.1.1.-</ecNumber>
    </recommendedName>
    <alternativeName>
        <fullName>NAD(P)H dehydrogenase subunit 6</fullName>
    </alternativeName>
    <alternativeName>
        <fullName>NADH-plastoquinone oxidoreductase subunit 6</fullName>
    </alternativeName>
</protein>
<accession>B0Z4S8</accession>
<geneLocation type="chloroplast"/>
<keyword id="KW-0150">Chloroplast</keyword>
<keyword id="KW-0472">Membrane</keyword>
<keyword id="KW-0520">NAD</keyword>
<keyword id="KW-0521">NADP</keyword>
<keyword id="KW-0934">Plastid</keyword>
<keyword id="KW-0618">Plastoquinone</keyword>
<keyword id="KW-0874">Quinone</keyword>
<keyword id="KW-0793">Thylakoid</keyword>
<keyword id="KW-1278">Translocase</keyword>
<keyword id="KW-0812">Transmembrane</keyword>
<keyword id="KW-1133">Transmembrane helix</keyword>
<keyword id="KW-0813">Transport</keyword>
<proteinExistence type="inferred from homology"/>
<organism>
    <name type="scientific">Oenothera argillicola</name>
    <name type="common">Appalachian evening primrose</name>
    <dbReference type="NCBI Taxonomy" id="3940"/>
    <lineage>
        <taxon>Eukaryota</taxon>
        <taxon>Viridiplantae</taxon>
        <taxon>Streptophyta</taxon>
        <taxon>Embryophyta</taxon>
        <taxon>Tracheophyta</taxon>
        <taxon>Spermatophyta</taxon>
        <taxon>Magnoliopsida</taxon>
        <taxon>eudicotyledons</taxon>
        <taxon>Gunneridae</taxon>
        <taxon>Pentapetalae</taxon>
        <taxon>rosids</taxon>
        <taxon>malvids</taxon>
        <taxon>Myrtales</taxon>
        <taxon>Onagraceae</taxon>
        <taxon>Onagroideae</taxon>
        <taxon>Onagreae</taxon>
        <taxon>Oenothera</taxon>
    </lineage>
</organism>
<comment type="function">
    <text evidence="1">NDH shuttles electrons from NAD(P)H:plastoquinone, via FMN and iron-sulfur (Fe-S) centers, to quinones in the photosynthetic chain and possibly in a chloroplast respiratory chain. The immediate electron acceptor for the enzyme in this species is believed to be plastoquinone. Couples the redox reaction to proton translocation, and thus conserves the redox energy in a proton gradient (By similarity).</text>
</comment>
<comment type="catalytic activity">
    <reaction>
        <text>a plastoquinone + NADH + (n+1) H(+)(in) = a plastoquinol + NAD(+) + n H(+)(out)</text>
        <dbReference type="Rhea" id="RHEA:42608"/>
        <dbReference type="Rhea" id="RHEA-COMP:9561"/>
        <dbReference type="Rhea" id="RHEA-COMP:9562"/>
        <dbReference type="ChEBI" id="CHEBI:15378"/>
        <dbReference type="ChEBI" id="CHEBI:17757"/>
        <dbReference type="ChEBI" id="CHEBI:57540"/>
        <dbReference type="ChEBI" id="CHEBI:57945"/>
        <dbReference type="ChEBI" id="CHEBI:62192"/>
    </reaction>
</comment>
<comment type="catalytic activity">
    <reaction>
        <text>a plastoquinone + NADPH + (n+1) H(+)(in) = a plastoquinol + NADP(+) + n H(+)(out)</text>
        <dbReference type="Rhea" id="RHEA:42612"/>
        <dbReference type="Rhea" id="RHEA-COMP:9561"/>
        <dbReference type="Rhea" id="RHEA-COMP:9562"/>
        <dbReference type="ChEBI" id="CHEBI:15378"/>
        <dbReference type="ChEBI" id="CHEBI:17757"/>
        <dbReference type="ChEBI" id="CHEBI:57783"/>
        <dbReference type="ChEBI" id="CHEBI:58349"/>
        <dbReference type="ChEBI" id="CHEBI:62192"/>
    </reaction>
</comment>
<comment type="subunit">
    <text evidence="1">NDH is composed of at least 16 different subunits, 5 of which are encoded in the nucleus.</text>
</comment>
<comment type="subcellular location">
    <subcellularLocation>
        <location evidence="1">Plastid</location>
        <location evidence="1">Chloroplast thylakoid membrane</location>
        <topology evidence="1">Multi-pass membrane protein</topology>
    </subcellularLocation>
</comment>
<comment type="similarity">
    <text evidence="3">Belongs to the complex I subunit 6 family.</text>
</comment>
<dbReference type="EC" id="7.1.1.-"/>
<dbReference type="EMBL" id="EU262887">
    <property type="protein sequence ID" value="ABW98756.1"/>
    <property type="molecule type" value="Genomic_DNA"/>
</dbReference>
<dbReference type="RefSeq" id="YP_001687189.1">
    <property type="nucleotide sequence ID" value="NC_010358.2"/>
</dbReference>
<dbReference type="SMR" id="B0Z4S8"/>
<dbReference type="GeneID" id="5951833"/>
<dbReference type="GO" id="GO:0009535">
    <property type="term" value="C:chloroplast thylakoid membrane"/>
    <property type="evidence" value="ECO:0007669"/>
    <property type="project" value="UniProtKB-SubCell"/>
</dbReference>
<dbReference type="GO" id="GO:0008137">
    <property type="term" value="F:NADH dehydrogenase (ubiquinone) activity"/>
    <property type="evidence" value="ECO:0007669"/>
    <property type="project" value="InterPro"/>
</dbReference>
<dbReference type="GO" id="GO:0048038">
    <property type="term" value="F:quinone binding"/>
    <property type="evidence" value="ECO:0007669"/>
    <property type="project" value="UniProtKB-KW"/>
</dbReference>
<dbReference type="FunFam" id="1.20.120.1200:FF:000002">
    <property type="entry name" value="NAD(P)H-quinone oxidoreductase subunit 6, chloroplastic"/>
    <property type="match status" value="1"/>
</dbReference>
<dbReference type="Gene3D" id="1.20.120.1200">
    <property type="entry name" value="NADH-ubiquinone/plastoquinone oxidoreductase chain 6, subunit NuoJ"/>
    <property type="match status" value="1"/>
</dbReference>
<dbReference type="InterPro" id="IPR050290">
    <property type="entry name" value="NAD(P)H-Q_Oxidoreduct_6"/>
</dbReference>
<dbReference type="InterPro" id="IPR001457">
    <property type="entry name" value="NADH_UbQ/plastoQ_OxRdtase_su6"/>
</dbReference>
<dbReference type="InterPro" id="IPR042106">
    <property type="entry name" value="Nuo/plastoQ_OxRdtase_6_NuoJ"/>
</dbReference>
<dbReference type="PANTHER" id="PTHR48479">
    <property type="entry name" value="NAD(P)H-QUINONE OXIDOREDUCTASE SUBUNIT 6, CHLOROPLASTIC"/>
    <property type="match status" value="1"/>
</dbReference>
<dbReference type="PANTHER" id="PTHR48479:SF1">
    <property type="entry name" value="NAD(P)H-QUINONE OXIDOREDUCTASE SUBUNIT 6, CHLOROPLASTIC"/>
    <property type="match status" value="1"/>
</dbReference>
<dbReference type="Pfam" id="PF00499">
    <property type="entry name" value="Oxidored_q3"/>
    <property type="match status" value="1"/>
</dbReference>
<gene>
    <name type="primary">ndhG</name>
</gene>
<reference key="1">
    <citation type="journal article" date="2008" name="Nucleic Acids Res.">
        <title>The complete nucleotide sequences of the five genetically distinct plastid genomes of Oenothera, subsection Oenothera: I. Sequence evaluation and plastome evolution.</title>
        <authorList>
            <person name="Greiner S."/>
            <person name="Wang X."/>
            <person name="Rauwolf U."/>
            <person name="Silber M.V."/>
            <person name="Mayer K."/>
            <person name="Meurer J."/>
            <person name="Haberer G."/>
            <person name="Herrmann R.G."/>
        </authorList>
    </citation>
    <scope>NUCLEOTIDE SEQUENCE [LARGE SCALE GENOMIC DNA]</scope>
    <source>
        <strain>cv. Douthat 1</strain>
    </source>
</reference>
<feature type="chain" id="PRO_0000360276" description="NAD(P)H-quinone oxidoreductase subunit 6, chloroplastic">
    <location>
        <begin position="1"/>
        <end position="176"/>
    </location>
</feature>
<feature type="transmembrane region" description="Helical" evidence="2">
    <location>
        <begin position="10"/>
        <end position="30"/>
    </location>
</feature>
<feature type="transmembrane region" description="Helical" evidence="2">
    <location>
        <begin position="32"/>
        <end position="52"/>
    </location>
</feature>
<feature type="transmembrane region" description="Helical" evidence="2">
    <location>
        <begin position="61"/>
        <end position="81"/>
    </location>
</feature>
<feature type="transmembrane region" description="Helical" evidence="2">
    <location>
        <begin position="92"/>
        <end position="112"/>
    </location>
</feature>
<feature type="transmembrane region" description="Helical" evidence="2">
    <location>
        <begin position="152"/>
        <end position="172"/>
    </location>
</feature>
<evidence type="ECO:0000250" key="1"/>
<evidence type="ECO:0000255" key="2"/>
<evidence type="ECO:0000305" key="3"/>
<name>NU6C_OENAR</name>